<name>LLDD_SALAR</name>
<protein>
    <recommendedName>
        <fullName evidence="1">L-lactate dehydrogenase</fullName>
        <ecNumber evidence="1">1.1.-.-</ecNumber>
    </recommendedName>
</protein>
<keyword id="KW-0997">Cell inner membrane</keyword>
<keyword id="KW-1003">Cell membrane</keyword>
<keyword id="KW-0285">Flavoprotein</keyword>
<keyword id="KW-0288">FMN</keyword>
<keyword id="KW-0472">Membrane</keyword>
<keyword id="KW-0560">Oxidoreductase</keyword>
<keyword id="KW-1185">Reference proteome</keyword>
<proteinExistence type="inferred from homology"/>
<dbReference type="EC" id="1.1.-.-" evidence="1"/>
<dbReference type="EMBL" id="CP000880">
    <property type="protein sequence ID" value="ABX23742.1"/>
    <property type="molecule type" value="Genomic_DNA"/>
</dbReference>
<dbReference type="SMR" id="A9MLC3"/>
<dbReference type="STRING" id="41514.SARI_03948"/>
<dbReference type="KEGG" id="ses:SARI_03948"/>
<dbReference type="HOGENOM" id="CLU_020639_0_0_6"/>
<dbReference type="Proteomes" id="UP000002084">
    <property type="component" value="Chromosome"/>
</dbReference>
<dbReference type="GO" id="GO:0005886">
    <property type="term" value="C:plasma membrane"/>
    <property type="evidence" value="ECO:0007669"/>
    <property type="project" value="UniProtKB-SubCell"/>
</dbReference>
<dbReference type="GO" id="GO:0010181">
    <property type="term" value="F:FMN binding"/>
    <property type="evidence" value="ECO:0007669"/>
    <property type="project" value="InterPro"/>
</dbReference>
<dbReference type="GO" id="GO:0004459">
    <property type="term" value="F:L-lactate dehydrogenase activity"/>
    <property type="evidence" value="ECO:0007669"/>
    <property type="project" value="UniProtKB-UniRule"/>
</dbReference>
<dbReference type="GO" id="GO:0009060">
    <property type="term" value="P:aerobic respiration"/>
    <property type="evidence" value="ECO:0007669"/>
    <property type="project" value="TreeGrafter"/>
</dbReference>
<dbReference type="GO" id="GO:0006089">
    <property type="term" value="P:lactate metabolic process"/>
    <property type="evidence" value="ECO:0007669"/>
    <property type="project" value="UniProtKB-UniRule"/>
</dbReference>
<dbReference type="CDD" id="cd02809">
    <property type="entry name" value="alpha_hydroxyacid_oxid_FMN"/>
    <property type="match status" value="1"/>
</dbReference>
<dbReference type="FunFam" id="3.20.20.70:FF:000029">
    <property type="entry name" value="L-lactate dehydrogenase"/>
    <property type="match status" value="1"/>
</dbReference>
<dbReference type="Gene3D" id="3.20.20.70">
    <property type="entry name" value="Aldolase class I"/>
    <property type="match status" value="1"/>
</dbReference>
<dbReference type="HAMAP" id="MF_01559">
    <property type="entry name" value="L_lact_dehydr"/>
    <property type="match status" value="1"/>
</dbReference>
<dbReference type="InterPro" id="IPR013785">
    <property type="entry name" value="Aldolase_TIM"/>
</dbReference>
<dbReference type="InterPro" id="IPR012133">
    <property type="entry name" value="Alpha-hydoxy_acid_DH_FMN"/>
</dbReference>
<dbReference type="InterPro" id="IPR000262">
    <property type="entry name" value="FMN-dep_DH"/>
</dbReference>
<dbReference type="InterPro" id="IPR037396">
    <property type="entry name" value="FMN_HAD"/>
</dbReference>
<dbReference type="InterPro" id="IPR008259">
    <property type="entry name" value="FMN_hydac_DH_AS"/>
</dbReference>
<dbReference type="InterPro" id="IPR020920">
    <property type="entry name" value="LldD"/>
</dbReference>
<dbReference type="NCBIfam" id="NF033901">
    <property type="entry name" value="L_lactate_LldD"/>
    <property type="match status" value="1"/>
</dbReference>
<dbReference type="NCBIfam" id="NF008398">
    <property type="entry name" value="PRK11197.1"/>
    <property type="match status" value="1"/>
</dbReference>
<dbReference type="PANTHER" id="PTHR10578:SF85">
    <property type="entry name" value="L-LACTATE DEHYDROGENASE"/>
    <property type="match status" value="1"/>
</dbReference>
<dbReference type="PANTHER" id="PTHR10578">
    <property type="entry name" value="S -2-HYDROXY-ACID OXIDASE-RELATED"/>
    <property type="match status" value="1"/>
</dbReference>
<dbReference type="Pfam" id="PF01070">
    <property type="entry name" value="FMN_dh"/>
    <property type="match status" value="1"/>
</dbReference>
<dbReference type="PIRSF" id="PIRSF000138">
    <property type="entry name" value="Al-hdrx_acd_dh"/>
    <property type="match status" value="1"/>
</dbReference>
<dbReference type="SUPFAM" id="SSF51395">
    <property type="entry name" value="FMN-linked oxidoreductases"/>
    <property type="match status" value="1"/>
</dbReference>
<dbReference type="PROSITE" id="PS00557">
    <property type="entry name" value="FMN_HYDROXY_ACID_DH_1"/>
    <property type="match status" value="1"/>
</dbReference>
<dbReference type="PROSITE" id="PS51349">
    <property type="entry name" value="FMN_HYDROXY_ACID_DH_2"/>
    <property type="match status" value="1"/>
</dbReference>
<organism>
    <name type="scientific">Salmonella arizonae (strain ATCC BAA-731 / CDC346-86 / RSK2980)</name>
    <dbReference type="NCBI Taxonomy" id="41514"/>
    <lineage>
        <taxon>Bacteria</taxon>
        <taxon>Pseudomonadati</taxon>
        <taxon>Pseudomonadota</taxon>
        <taxon>Gammaproteobacteria</taxon>
        <taxon>Enterobacterales</taxon>
        <taxon>Enterobacteriaceae</taxon>
        <taxon>Salmonella</taxon>
    </lineage>
</organism>
<sequence>MIISAASDYRAAAQRTLPPFLFHYIDGGAYAEYTLRRNVEDLSQVALRQRVLKNMSDLSLETTLFNETLSMPVALAPVGLCGMYARRGEVQAAAAADAKGIPFTLSTVSVCPIEEVAPTLKRPMWFQLYVLRDRGFMRNALERAKAAGCSTLVFTVDMPTPGARYRDAHSGMSGPNAAMRRYWQAVMHPKWAWDVGLNGRPHDLGNISAYLGKPTGLEDYIGWLANNFDPSISWKDLEWIREFWDGPMVIKGILDPEDARDAVRFGADGIVVSNHGGRQLDGVLSSARALPAIADAVKGDIAILADSGIRNGLDVVRMIALGADTVLLGRAYLYALATAGKAGVANLLDLIEKEMKVAMTLTGAKSISEISGDSLVQELGKSLPAALAPMSKGDAT</sequence>
<evidence type="ECO:0000255" key="1">
    <source>
        <dbReference type="HAMAP-Rule" id="MF_01559"/>
    </source>
</evidence>
<accession>A9MLC3</accession>
<comment type="function">
    <text evidence="1">Catalyzes the conversion of L-lactate to pyruvate. Is coupled to the respiratory chain.</text>
</comment>
<comment type="catalytic activity">
    <reaction evidence="1">
        <text>(S)-lactate + A = pyruvate + AH2</text>
        <dbReference type="Rhea" id="RHEA:45816"/>
        <dbReference type="ChEBI" id="CHEBI:13193"/>
        <dbReference type="ChEBI" id="CHEBI:15361"/>
        <dbReference type="ChEBI" id="CHEBI:16651"/>
        <dbReference type="ChEBI" id="CHEBI:17499"/>
    </reaction>
</comment>
<comment type="cofactor">
    <cofactor evidence="1">
        <name>FMN</name>
        <dbReference type="ChEBI" id="CHEBI:58210"/>
    </cofactor>
</comment>
<comment type="subcellular location">
    <subcellularLocation>
        <location evidence="1">Cell inner membrane</location>
        <topology evidence="1">Peripheral membrane protein</topology>
    </subcellularLocation>
</comment>
<comment type="similarity">
    <text evidence="1">Belongs to the FMN-dependent alpha-hydroxy acid dehydrogenase family.</text>
</comment>
<reference key="1">
    <citation type="submission" date="2007-11" db="EMBL/GenBank/DDBJ databases">
        <authorList>
            <consortium name="The Salmonella enterica serovar Arizonae Genome Sequencing Project"/>
            <person name="McClelland M."/>
            <person name="Sanderson E.K."/>
            <person name="Porwollik S."/>
            <person name="Spieth J."/>
            <person name="Clifton W.S."/>
            <person name="Fulton R."/>
            <person name="Chunyan W."/>
            <person name="Wollam A."/>
            <person name="Shah N."/>
            <person name="Pepin K."/>
            <person name="Bhonagiri V."/>
            <person name="Nash W."/>
            <person name="Johnson M."/>
            <person name="Thiruvilangam P."/>
            <person name="Wilson R."/>
        </authorList>
    </citation>
    <scope>NUCLEOTIDE SEQUENCE [LARGE SCALE GENOMIC DNA]</scope>
    <source>
        <strain>ATCC BAA-731 / CDC346-86 / RSK2980</strain>
    </source>
</reference>
<gene>
    <name evidence="1" type="primary">lldD</name>
    <name type="ordered locus">SARI_03948</name>
</gene>
<feature type="chain" id="PRO_0000383438" description="L-lactate dehydrogenase">
    <location>
        <begin position="1"/>
        <end position="396"/>
    </location>
</feature>
<feature type="domain" description="FMN hydroxy acid dehydrogenase" evidence="1">
    <location>
        <begin position="1"/>
        <end position="380"/>
    </location>
</feature>
<feature type="active site" description="Proton acceptor" evidence="1">
    <location>
        <position position="275"/>
    </location>
</feature>
<feature type="binding site" evidence="1">
    <location>
        <position position="24"/>
    </location>
    <ligand>
        <name>substrate</name>
    </ligand>
</feature>
<feature type="binding site" evidence="1">
    <location>
        <position position="106"/>
    </location>
    <ligand>
        <name>FMN</name>
        <dbReference type="ChEBI" id="CHEBI:58210"/>
    </ligand>
</feature>
<feature type="binding site" evidence="1">
    <location>
        <position position="127"/>
    </location>
    <ligand>
        <name>FMN</name>
        <dbReference type="ChEBI" id="CHEBI:58210"/>
    </ligand>
</feature>
<feature type="binding site" evidence="1">
    <location>
        <position position="129"/>
    </location>
    <ligand>
        <name>substrate</name>
    </ligand>
</feature>
<feature type="binding site" evidence="1">
    <location>
        <position position="155"/>
    </location>
    <ligand>
        <name>FMN</name>
        <dbReference type="ChEBI" id="CHEBI:58210"/>
    </ligand>
</feature>
<feature type="binding site" evidence="1">
    <location>
        <position position="164"/>
    </location>
    <ligand>
        <name>substrate</name>
    </ligand>
</feature>
<feature type="binding site" evidence="1">
    <location>
        <position position="251"/>
    </location>
    <ligand>
        <name>FMN</name>
        <dbReference type="ChEBI" id="CHEBI:58210"/>
    </ligand>
</feature>
<feature type="binding site" evidence="1">
    <location>
        <position position="278"/>
    </location>
    <ligand>
        <name>substrate</name>
    </ligand>
</feature>
<feature type="binding site" evidence="1">
    <location>
        <begin position="306"/>
        <end position="330"/>
    </location>
    <ligand>
        <name>FMN</name>
        <dbReference type="ChEBI" id="CHEBI:58210"/>
    </ligand>
</feature>